<evidence type="ECO:0000255" key="1">
    <source>
        <dbReference type="PROSITE-ProRule" id="PRU01182"/>
    </source>
</evidence>
<evidence type="ECO:0000305" key="2"/>
<sequence length="224" mass="25420">MSLMNLPEESRPREKLLALGPKSLTDAELLAIFLRTGTQGMNAIELADKLLKEFGSLRKLLSSDENEFCSHKGLGTAKFAQLQAVVEMTERYLFEKIEKEDALTSPEHTKRYLTRMLRDRHREAFYVLFLDNQHRVLKGEILFEGTIDVAAVYPREVVKRSIDYNAAAIILAHNHPSGVAEPSQADRRITKRISDAVELVDIRVLDHFVIGDGEIVSFAERGWI</sequence>
<comment type="similarity">
    <text evidence="2">Belongs to the UPF0758 family.</text>
</comment>
<organism>
    <name type="scientific">Aliivibrio fischeri (strain ATCC 700601 / ES114)</name>
    <name type="common">Vibrio fischeri</name>
    <dbReference type="NCBI Taxonomy" id="312309"/>
    <lineage>
        <taxon>Bacteria</taxon>
        <taxon>Pseudomonadati</taxon>
        <taxon>Pseudomonadota</taxon>
        <taxon>Gammaproteobacteria</taxon>
        <taxon>Vibrionales</taxon>
        <taxon>Vibrionaceae</taxon>
        <taxon>Aliivibrio</taxon>
    </lineage>
</organism>
<keyword id="KW-0378">Hydrolase</keyword>
<keyword id="KW-0479">Metal-binding</keyword>
<keyword id="KW-0482">Metalloprotease</keyword>
<keyword id="KW-0645">Protease</keyword>
<keyword id="KW-1185">Reference proteome</keyword>
<keyword id="KW-0862">Zinc</keyword>
<name>Y126_ALIF1</name>
<reference key="1">
    <citation type="journal article" date="2005" name="Proc. Natl. Acad. Sci. U.S.A.">
        <title>Complete genome sequence of Vibrio fischeri: a symbiotic bacterium with pathogenic congeners.</title>
        <authorList>
            <person name="Ruby E.G."/>
            <person name="Urbanowski M."/>
            <person name="Campbell J."/>
            <person name="Dunn A."/>
            <person name="Faini M."/>
            <person name="Gunsalus R."/>
            <person name="Lostroh P."/>
            <person name="Lupp C."/>
            <person name="McCann J."/>
            <person name="Millikan D."/>
            <person name="Schaefer A."/>
            <person name="Stabb E."/>
            <person name="Stevens A."/>
            <person name="Visick K."/>
            <person name="Whistler C."/>
            <person name="Greenberg E.P."/>
        </authorList>
    </citation>
    <scope>NUCLEOTIDE SEQUENCE [LARGE SCALE GENOMIC DNA]</scope>
    <source>
        <strain>ATCC 700601 / ES114</strain>
    </source>
</reference>
<gene>
    <name type="ordered locus">VF_0126</name>
</gene>
<feature type="chain" id="PRO_0000190750" description="UPF0758 protein VF_0126">
    <location>
        <begin position="1"/>
        <end position="224"/>
    </location>
</feature>
<feature type="domain" description="MPN" evidence="1">
    <location>
        <begin position="102"/>
        <end position="224"/>
    </location>
</feature>
<feature type="short sequence motif" description="JAMM motif" evidence="1">
    <location>
        <begin position="173"/>
        <end position="186"/>
    </location>
</feature>
<feature type="binding site" evidence="1">
    <location>
        <position position="173"/>
    </location>
    <ligand>
        <name>Zn(2+)</name>
        <dbReference type="ChEBI" id="CHEBI:29105"/>
        <note>catalytic</note>
    </ligand>
</feature>
<feature type="binding site" evidence="1">
    <location>
        <position position="175"/>
    </location>
    <ligand>
        <name>Zn(2+)</name>
        <dbReference type="ChEBI" id="CHEBI:29105"/>
        <note>catalytic</note>
    </ligand>
</feature>
<feature type="binding site" evidence="1">
    <location>
        <position position="186"/>
    </location>
    <ligand>
        <name>Zn(2+)</name>
        <dbReference type="ChEBI" id="CHEBI:29105"/>
        <note>catalytic</note>
    </ligand>
</feature>
<accession>Q5E8M5</accession>
<proteinExistence type="inferred from homology"/>
<protein>
    <recommendedName>
        <fullName>UPF0758 protein VF_0126</fullName>
    </recommendedName>
</protein>
<dbReference type="EMBL" id="CP000020">
    <property type="protein sequence ID" value="AAW84621.1"/>
    <property type="molecule type" value="Genomic_DNA"/>
</dbReference>
<dbReference type="RefSeq" id="WP_011260988.1">
    <property type="nucleotide sequence ID" value="NC_006840.2"/>
</dbReference>
<dbReference type="RefSeq" id="YP_203509.1">
    <property type="nucleotide sequence ID" value="NC_006840.2"/>
</dbReference>
<dbReference type="SMR" id="Q5E8M5"/>
<dbReference type="STRING" id="312309.VF_0126"/>
<dbReference type="EnsemblBacteria" id="AAW84621">
    <property type="protein sequence ID" value="AAW84621"/>
    <property type="gene ID" value="VF_0126"/>
</dbReference>
<dbReference type="GeneID" id="54162752"/>
<dbReference type="KEGG" id="vfi:VF_0126"/>
<dbReference type="PATRIC" id="fig|312309.11.peg.125"/>
<dbReference type="eggNOG" id="COG2003">
    <property type="taxonomic scope" value="Bacteria"/>
</dbReference>
<dbReference type="HOGENOM" id="CLU_073529_0_1_6"/>
<dbReference type="OrthoDB" id="9804482at2"/>
<dbReference type="Proteomes" id="UP000000537">
    <property type="component" value="Chromosome I"/>
</dbReference>
<dbReference type="GO" id="GO:0046872">
    <property type="term" value="F:metal ion binding"/>
    <property type="evidence" value="ECO:0007669"/>
    <property type="project" value="UniProtKB-KW"/>
</dbReference>
<dbReference type="GO" id="GO:0008237">
    <property type="term" value="F:metallopeptidase activity"/>
    <property type="evidence" value="ECO:0007669"/>
    <property type="project" value="UniProtKB-KW"/>
</dbReference>
<dbReference type="GO" id="GO:0006508">
    <property type="term" value="P:proteolysis"/>
    <property type="evidence" value="ECO:0007669"/>
    <property type="project" value="UniProtKB-KW"/>
</dbReference>
<dbReference type="CDD" id="cd08071">
    <property type="entry name" value="MPN_DUF2466"/>
    <property type="match status" value="1"/>
</dbReference>
<dbReference type="FunFam" id="3.40.140.10:FF:000032">
    <property type="entry name" value="DNA repair protein RadC"/>
    <property type="match status" value="1"/>
</dbReference>
<dbReference type="Gene3D" id="3.40.140.10">
    <property type="entry name" value="Cytidine Deaminase, domain 2"/>
    <property type="match status" value="1"/>
</dbReference>
<dbReference type="InterPro" id="IPR037518">
    <property type="entry name" value="MPN"/>
</dbReference>
<dbReference type="InterPro" id="IPR025657">
    <property type="entry name" value="RadC_JAB"/>
</dbReference>
<dbReference type="InterPro" id="IPR010994">
    <property type="entry name" value="RuvA_2-like"/>
</dbReference>
<dbReference type="InterPro" id="IPR001405">
    <property type="entry name" value="UPF0758"/>
</dbReference>
<dbReference type="InterPro" id="IPR020891">
    <property type="entry name" value="UPF0758_CS"/>
</dbReference>
<dbReference type="InterPro" id="IPR046778">
    <property type="entry name" value="UPF0758_N"/>
</dbReference>
<dbReference type="NCBIfam" id="NF000642">
    <property type="entry name" value="PRK00024.1"/>
    <property type="match status" value="1"/>
</dbReference>
<dbReference type="NCBIfam" id="TIGR00608">
    <property type="entry name" value="radc"/>
    <property type="match status" value="1"/>
</dbReference>
<dbReference type="PANTHER" id="PTHR30471">
    <property type="entry name" value="DNA REPAIR PROTEIN RADC"/>
    <property type="match status" value="1"/>
</dbReference>
<dbReference type="PANTHER" id="PTHR30471:SF3">
    <property type="entry name" value="UPF0758 PROTEIN YEES-RELATED"/>
    <property type="match status" value="1"/>
</dbReference>
<dbReference type="Pfam" id="PF04002">
    <property type="entry name" value="RadC"/>
    <property type="match status" value="1"/>
</dbReference>
<dbReference type="Pfam" id="PF20582">
    <property type="entry name" value="UPF0758_N"/>
    <property type="match status" value="1"/>
</dbReference>
<dbReference type="SUPFAM" id="SSF102712">
    <property type="entry name" value="JAB1/MPN domain"/>
    <property type="match status" value="1"/>
</dbReference>
<dbReference type="SUPFAM" id="SSF47781">
    <property type="entry name" value="RuvA domain 2-like"/>
    <property type="match status" value="1"/>
</dbReference>
<dbReference type="PROSITE" id="PS50249">
    <property type="entry name" value="MPN"/>
    <property type="match status" value="1"/>
</dbReference>
<dbReference type="PROSITE" id="PS01302">
    <property type="entry name" value="UPF0758"/>
    <property type="match status" value="1"/>
</dbReference>